<sequence length="178" mass="20445">MRRPFRATPVQKDGPRSNRDIRVPRVQLIDAEGQNHGDVSIQEAMAMAEEAGLDLVEIVPNAEPPVCKIVDLGKLKYQNQKKAAEARKKQKTVEIKEIKMRPNIDTHDYEVKMKAAQRFFEEGDKVKVTLRFRGREMAHQELGMKLLQRVKEDTVEIAKVESEPKLEGRQMMMVLAPR</sequence>
<dbReference type="EMBL" id="AF196569">
    <property type="protein sequence ID" value="AAF05835.2"/>
    <property type="molecule type" value="Genomic_DNA"/>
</dbReference>
<dbReference type="EMBL" id="AE017223">
    <property type="protein sequence ID" value="AAX75389.1"/>
    <property type="molecule type" value="Genomic_DNA"/>
</dbReference>
<dbReference type="SMR" id="P0A3L0"/>
<dbReference type="EnsemblBacteria" id="AAX75389">
    <property type="protein sequence ID" value="AAX75389"/>
    <property type="gene ID" value="BruAb1_2092"/>
</dbReference>
<dbReference type="KEGG" id="bmb:BruAb1_2092"/>
<dbReference type="HOGENOM" id="CLU_054919_3_2_5"/>
<dbReference type="Proteomes" id="UP000000540">
    <property type="component" value="Chromosome I"/>
</dbReference>
<dbReference type="GO" id="GO:0005829">
    <property type="term" value="C:cytosol"/>
    <property type="evidence" value="ECO:0007669"/>
    <property type="project" value="TreeGrafter"/>
</dbReference>
<dbReference type="GO" id="GO:0016020">
    <property type="term" value="C:membrane"/>
    <property type="evidence" value="ECO:0007669"/>
    <property type="project" value="TreeGrafter"/>
</dbReference>
<dbReference type="GO" id="GO:0043022">
    <property type="term" value="F:ribosome binding"/>
    <property type="evidence" value="ECO:0007669"/>
    <property type="project" value="TreeGrafter"/>
</dbReference>
<dbReference type="GO" id="GO:0003743">
    <property type="term" value="F:translation initiation factor activity"/>
    <property type="evidence" value="ECO:0007669"/>
    <property type="project" value="UniProtKB-UniRule"/>
</dbReference>
<dbReference type="GO" id="GO:0032790">
    <property type="term" value="P:ribosome disassembly"/>
    <property type="evidence" value="ECO:0007669"/>
    <property type="project" value="TreeGrafter"/>
</dbReference>
<dbReference type="FunFam" id="3.30.110.10:FF:000001">
    <property type="entry name" value="Translation initiation factor IF-3"/>
    <property type="match status" value="1"/>
</dbReference>
<dbReference type="Gene3D" id="3.30.110.10">
    <property type="entry name" value="Translation initiation factor 3 (IF-3), C-terminal domain"/>
    <property type="match status" value="1"/>
</dbReference>
<dbReference type="Gene3D" id="3.10.20.80">
    <property type="entry name" value="Translation initiation factor 3 (IF-3), N-terminal domain"/>
    <property type="match status" value="1"/>
</dbReference>
<dbReference type="HAMAP" id="MF_00080">
    <property type="entry name" value="IF_3"/>
    <property type="match status" value="1"/>
</dbReference>
<dbReference type="InterPro" id="IPR036788">
    <property type="entry name" value="T_IF-3_C_sf"/>
</dbReference>
<dbReference type="InterPro" id="IPR036787">
    <property type="entry name" value="T_IF-3_N_sf"/>
</dbReference>
<dbReference type="InterPro" id="IPR001288">
    <property type="entry name" value="Translation_initiation_fac_3"/>
</dbReference>
<dbReference type="InterPro" id="IPR019815">
    <property type="entry name" value="Translation_initiation_fac_3_C"/>
</dbReference>
<dbReference type="InterPro" id="IPR019814">
    <property type="entry name" value="Translation_initiation_fac_3_N"/>
</dbReference>
<dbReference type="NCBIfam" id="TIGR00168">
    <property type="entry name" value="infC"/>
    <property type="match status" value="1"/>
</dbReference>
<dbReference type="PANTHER" id="PTHR10938">
    <property type="entry name" value="TRANSLATION INITIATION FACTOR IF-3"/>
    <property type="match status" value="1"/>
</dbReference>
<dbReference type="PANTHER" id="PTHR10938:SF0">
    <property type="entry name" value="TRANSLATION INITIATION FACTOR IF-3, MITOCHONDRIAL"/>
    <property type="match status" value="1"/>
</dbReference>
<dbReference type="Pfam" id="PF00707">
    <property type="entry name" value="IF3_C"/>
    <property type="match status" value="1"/>
</dbReference>
<dbReference type="Pfam" id="PF05198">
    <property type="entry name" value="IF3_N"/>
    <property type="match status" value="1"/>
</dbReference>
<dbReference type="SUPFAM" id="SSF55200">
    <property type="entry name" value="Translation initiation factor IF3, C-terminal domain"/>
    <property type="match status" value="1"/>
</dbReference>
<dbReference type="SUPFAM" id="SSF54364">
    <property type="entry name" value="Translation initiation factor IF3, N-terminal domain"/>
    <property type="match status" value="1"/>
</dbReference>
<feature type="chain" id="PRO_0000177492" description="Translation initiation factor IF-3">
    <location>
        <begin position="1"/>
        <end position="178"/>
    </location>
</feature>
<feature type="region of interest" description="Disordered" evidence="2">
    <location>
        <begin position="1"/>
        <end position="20"/>
    </location>
</feature>
<comment type="function">
    <text evidence="1">IF-3 binds to the 30S ribosomal subunit and shifts the equilibrium between 70S ribosomes and their 50S and 30S subunits in favor of the free subunits, thus enhancing the availability of 30S subunits on which protein synthesis initiation begins.</text>
</comment>
<comment type="subunit">
    <text evidence="1">Monomer.</text>
</comment>
<comment type="subcellular location">
    <subcellularLocation>
        <location evidence="1">Cytoplasm</location>
    </subcellularLocation>
</comment>
<comment type="similarity">
    <text evidence="1">Belongs to the IF-3 family.</text>
</comment>
<accession>P0A3L0</accession>
<accession>Q57AE5</accession>
<accession>Q8YE68</accession>
<accession>Q9L8Q0</accession>
<protein>
    <recommendedName>
        <fullName evidence="1">Translation initiation factor IF-3</fullName>
    </recommendedName>
</protein>
<proteinExistence type="inferred from homology"/>
<organism>
    <name type="scientific">Brucella abortus biovar 1 (strain 9-941)</name>
    <dbReference type="NCBI Taxonomy" id="262698"/>
    <lineage>
        <taxon>Bacteria</taxon>
        <taxon>Pseudomonadati</taxon>
        <taxon>Pseudomonadota</taxon>
        <taxon>Alphaproteobacteria</taxon>
        <taxon>Hyphomicrobiales</taxon>
        <taxon>Brucellaceae</taxon>
        <taxon>Brucella/Ochrobactrum group</taxon>
        <taxon>Brucella</taxon>
    </lineage>
</organism>
<keyword id="KW-0963">Cytoplasm</keyword>
<keyword id="KW-0396">Initiation factor</keyword>
<keyword id="KW-0648">Protein biosynthesis</keyword>
<name>IF3_BRUAB</name>
<evidence type="ECO:0000255" key="1">
    <source>
        <dbReference type="HAMAP-Rule" id="MF_00080"/>
    </source>
</evidence>
<evidence type="ECO:0000256" key="2">
    <source>
        <dbReference type="SAM" id="MobiDB-lite"/>
    </source>
</evidence>
<reference key="1">
    <citation type="submission" date="2000-02" db="EMBL/GenBank/DDBJ databases">
        <title>Sequence of the translation initiation factor IF-3 gene from Brucella abortus.</title>
        <authorList>
            <person name="Gonzalez M."/>
            <person name="Maldonado E."/>
            <person name="Andrews E."/>
            <person name="Folch H."/>
            <person name="Onate A."/>
        </authorList>
    </citation>
    <scope>NUCLEOTIDE SEQUENCE [GENOMIC DNA]</scope>
    <source>
        <strain>RB51</strain>
    </source>
</reference>
<reference key="2">
    <citation type="journal article" date="2005" name="J. Bacteriol.">
        <title>Completion of the genome sequence of Brucella abortus and comparison to the highly similar genomes of Brucella melitensis and Brucella suis.</title>
        <authorList>
            <person name="Halling S.M."/>
            <person name="Peterson-Burch B.D."/>
            <person name="Bricker B.J."/>
            <person name="Zuerner R.L."/>
            <person name="Qing Z."/>
            <person name="Li L.-L."/>
            <person name="Kapur V."/>
            <person name="Alt D.P."/>
            <person name="Olsen S.C."/>
        </authorList>
    </citation>
    <scope>NUCLEOTIDE SEQUENCE [LARGE SCALE GENOMIC DNA]</scope>
    <source>
        <strain>9-941</strain>
    </source>
</reference>
<gene>
    <name evidence="1" type="primary">infC</name>
    <name type="synonym">pifC</name>
    <name type="ordered locus">BruAb1_2092</name>
</gene>